<reference key="1">
    <citation type="journal article" date="1995" name="J. Immunol.">
        <title>Comparative sequence analysis of cytokine genes from human and nonhuman primates.</title>
        <authorList>
            <person name="Villinger F.J."/>
            <person name="Brar S.S."/>
            <person name="Mayne A.E."/>
            <person name="Chikkala N."/>
            <person name="Ansari A.A."/>
        </authorList>
    </citation>
    <scope>NUCLEOTIDE SEQUENCE [MRNA]</scope>
    <source>
        <tissue>Blood</tissue>
    </source>
</reference>
<sequence>MAEVPELASEMMAYYSGNEDDLFFDVDGPKQMKCSFQDLDLCPLGGGIQLQISHEHYNEGFRQAVSVVVAMEKLRKMLVPCPQIFQDNDLSTLIPFIFEEEPVFLDTRNNDACVHDAPVRSLHCTLRDAQLKSLVMSGPYELKALHLQGQDLEQQVVFSMSFVQGEESNDKIPVALGLKAKNLYLSCVLKDDKPTLQLESVDPKNYPKKKMEKRFVFNKIEINNKLEFESAQFPNWYISTSQAENMPVFLGGTRGGQDITDFTMQFVSS</sequence>
<dbReference type="EMBL" id="U19845">
    <property type="protein sequence ID" value="AAA86709.1"/>
    <property type="molecule type" value="mRNA"/>
</dbReference>
<dbReference type="RefSeq" id="NP_001036221.1">
    <property type="nucleotide sequence ID" value="NM_001042756.1"/>
</dbReference>
<dbReference type="SMR" id="P48090"/>
<dbReference type="FunCoup" id="P48090">
    <property type="interactions" value="1013"/>
</dbReference>
<dbReference type="STRING" id="9544.ENSMMUP00000079493"/>
<dbReference type="PaxDb" id="9544-ENSMMUP00000026007"/>
<dbReference type="GeneID" id="704701"/>
<dbReference type="KEGG" id="mcc:704701"/>
<dbReference type="CTD" id="3553"/>
<dbReference type="eggNOG" id="ENOG502S3E9">
    <property type="taxonomic scope" value="Eukaryota"/>
</dbReference>
<dbReference type="InParanoid" id="P48090"/>
<dbReference type="OrthoDB" id="9449069at2759"/>
<dbReference type="Proteomes" id="UP000006718">
    <property type="component" value="Unassembled WGS sequence"/>
</dbReference>
<dbReference type="GO" id="GO:0005829">
    <property type="term" value="C:cytosol"/>
    <property type="evidence" value="ECO:0007669"/>
    <property type="project" value="UniProtKB-SubCell"/>
</dbReference>
<dbReference type="GO" id="GO:0005615">
    <property type="term" value="C:extracellular space"/>
    <property type="evidence" value="ECO:0000318"/>
    <property type="project" value="GO_Central"/>
</dbReference>
<dbReference type="GO" id="GO:0005764">
    <property type="term" value="C:lysosome"/>
    <property type="evidence" value="ECO:0007669"/>
    <property type="project" value="UniProtKB-SubCell"/>
</dbReference>
<dbReference type="GO" id="GO:0005125">
    <property type="term" value="F:cytokine activity"/>
    <property type="evidence" value="ECO:0000318"/>
    <property type="project" value="GO_Central"/>
</dbReference>
<dbReference type="GO" id="GO:0005178">
    <property type="term" value="F:integrin binding"/>
    <property type="evidence" value="ECO:0000250"/>
    <property type="project" value="UniProtKB"/>
</dbReference>
<dbReference type="GO" id="GO:0005149">
    <property type="term" value="F:interleukin-1 receptor binding"/>
    <property type="evidence" value="ECO:0007669"/>
    <property type="project" value="InterPro"/>
</dbReference>
<dbReference type="GO" id="GO:0071222">
    <property type="term" value="P:cellular response to lipopolysaccharide"/>
    <property type="evidence" value="ECO:0000318"/>
    <property type="project" value="GO_Central"/>
</dbReference>
<dbReference type="GO" id="GO:0019221">
    <property type="term" value="P:cytokine-mediated signaling pathway"/>
    <property type="evidence" value="ECO:0000318"/>
    <property type="project" value="GO_Central"/>
</dbReference>
<dbReference type="GO" id="GO:0001660">
    <property type="term" value="P:fever generation"/>
    <property type="evidence" value="ECO:0007669"/>
    <property type="project" value="UniProtKB-KW"/>
</dbReference>
<dbReference type="GO" id="GO:0006955">
    <property type="term" value="P:immune response"/>
    <property type="evidence" value="ECO:0000318"/>
    <property type="project" value="GO_Central"/>
</dbReference>
<dbReference type="GO" id="GO:0006954">
    <property type="term" value="P:inflammatory response"/>
    <property type="evidence" value="ECO:0000318"/>
    <property type="project" value="GO_Central"/>
</dbReference>
<dbReference type="GO" id="GO:0043123">
    <property type="term" value="P:positive regulation of canonical NF-kappaB signal transduction"/>
    <property type="evidence" value="ECO:0000318"/>
    <property type="project" value="GO_Central"/>
</dbReference>
<dbReference type="GO" id="GO:0051781">
    <property type="term" value="P:positive regulation of cell division"/>
    <property type="evidence" value="ECO:0007669"/>
    <property type="project" value="UniProtKB-KW"/>
</dbReference>
<dbReference type="GO" id="GO:0033092">
    <property type="term" value="P:positive regulation of immature T cell proliferation in thymus"/>
    <property type="evidence" value="ECO:0000318"/>
    <property type="project" value="GO_Central"/>
</dbReference>
<dbReference type="GO" id="GO:2000556">
    <property type="term" value="P:positive regulation of T-helper 1 cell cytokine production"/>
    <property type="evidence" value="ECO:0000250"/>
    <property type="project" value="UniProtKB"/>
</dbReference>
<dbReference type="GO" id="GO:0032729">
    <property type="term" value="P:positive regulation of type II interferon production"/>
    <property type="evidence" value="ECO:0000250"/>
    <property type="project" value="UniProtKB"/>
</dbReference>
<dbReference type="GO" id="GO:0070372">
    <property type="term" value="P:regulation of ERK1 and ERK2 cascade"/>
    <property type="evidence" value="ECO:0000318"/>
    <property type="project" value="GO_Central"/>
</dbReference>
<dbReference type="GO" id="GO:0010573">
    <property type="term" value="P:vascular endothelial growth factor production"/>
    <property type="evidence" value="ECO:0000250"/>
    <property type="project" value="UniProtKB"/>
</dbReference>
<dbReference type="CDD" id="cd23296">
    <property type="entry name" value="beta-trefoil_IL1B"/>
    <property type="match status" value="1"/>
</dbReference>
<dbReference type="FunFam" id="2.80.10.50:FF:000027">
    <property type="entry name" value="Interleukin-1 beta"/>
    <property type="match status" value="1"/>
</dbReference>
<dbReference type="Gene3D" id="2.80.10.50">
    <property type="match status" value="1"/>
</dbReference>
<dbReference type="InterPro" id="IPR020877">
    <property type="entry name" value="IL-1_CS"/>
</dbReference>
<dbReference type="InterPro" id="IPR000975">
    <property type="entry name" value="IL-1_fam"/>
</dbReference>
<dbReference type="InterPro" id="IPR003502">
    <property type="entry name" value="IL-1_propep"/>
</dbReference>
<dbReference type="InterPro" id="IPR008996">
    <property type="entry name" value="IL1/FGF"/>
</dbReference>
<dbReference type="PANTHER" id="PTHR10078:SF30">
    <property type="entry name" value="INTERLEUKIN-1 BETA"/>
    <property type="match status" value="1"/>
</dbReference>
<dbReference type="PANTHER" id="PTHR10078">
    <property type="entry name" value="INTERLEUKIN-1 FAMILY MEMBER"/>
    <property type="match status" value="1"/>
</dbReference>
<dbReference type="Pfam" id="PF00340">
    <property type="entry name" value="IL1"/>
    <property type="match status" value="1"/>
</dbReference>
<dbReference type="Pfam" id="PF02394">
    <property type="entry name" value="IL1_propep"/>
    <property type="match status" value="1"/>
</dbReference>
<dbReference type="PRINTS" id="PR00262">
    <property type="entry name" value="IL1HBGF"/>
</dbReference>
<dbReference type="PRINTS" id="PR00264">
    <property type="entry name" value="INTERLEUKIN1"/>
</dbReference>
<dbReference type="PRINTS" id="PR01359">
    <property type="entry name" value="INTRLEUKIN1B"/>
</dbReference>
<dbReference type="PRINTS" id="PR01357">
    <property type="entry name" value="INTRLEUKN1AB"/>
</dbReference>
<dbReference type="SMART" id="SM00125">
    <property type="entry name" value="IL1"/>
    <property type="match status" value="1"/>
</dbReference>
<dbReference type="SUPFAM" id="SSF50353">
    <property type="entry name" value="Cytokine"/>
    <property type="match status" value="1"/>
</dbReference>
<dbReference type="PROSITE" id="PS00253">
    <property type="entry name" value="INTERLEUKIN_1"/>
    <property type="match status" value="1"/>
</dbReference>
<protein>
    <recommendedName>
        <fullName>Interleukin-1 beta</fullName>
        <shortName>IL-1 beta</shortName>
    </recommendedName>
</protein>
<name>IL1B_MACMU</name>
<comment type="function">
    <text evidence="2">Potent pro-inflammatory cytokine. Initially discovered as the major endogenous pyrogen, induces prostaglandin synthesis, neutrophil influx and activation, T-cell activation and cytokine production, B-cell activation and antibody production, and fibroblast proliferation and collagen production. Promotes Th17 differentiation of T-cells. Synergizes with IL12/interleukin-12 to induce IFNG synthesis from T-helper 1 (Th1) cells. Plays a role in angiogenesis by inducing VEGF production synergistically with TNF and IL6. Involved in transduction of inflammation downstream of pyroptosis: its mature form is specifically released in the extracellular milieu by passing through the gasdermin-D (GSDMD) pore.</text>
</comment>
<comment type="subunit">
    <text evidence="2">Monomer. In its precursor form, weakly interacts with full-length MEFV; the mature cytokine does not interact at all. Interacts with integrins ITGAV:ITGBV and ITGA5:ITGB1; integrin-binding is required for IL1B signaling. Interacts with cargo receptor TMED10; the interaction is direct and is required for the secretion of IL1B mature form. Interacts with HSP90AB1; the interaction facilitates cargo translocation into the ERGIC. Interacts with HSP90B1; the interaction facilitates cargo translocation into the ERGIC.</text>
</comment>
<comment type="subcellular location">
    <subcellularLocation>
        <location evidence="2">Cytoplasm</location>
        <location evidence="2">Cytosol</location>
    </subcellularLocation>
    <subcellularLocation>
        <location evidence="2">Secreted</location>
    </subcellularLocation>
    <subcellularLocation>
        <location evidence="2">Lysosome</location>
    </subcellularLocation>
    <subcellularLocation>
        <location evidence="3">Secreted</location>
        <location evidence="3">Extracellular exosome</location>
    </subcellularLocation>
    <text evidence="2">The precursor is cytosolic. In response to inflammasome-activating signals, such as ATP for NLRP3 inflammasome or bacterial flagellin for NLRC4 inflammasome, cleaved and secreted. Mature form is secreted and released in the extracellular milieu by passing through the gasdermin-D (GSDMD) pore. In contrast, the precursor form is not released, due to the presence of an acidic region that is proteolytically removed by CASP1 during maturation. The secretion is dependent on protein unfolding and facilitated by the cargo receptor TMED10.</text>
</comment>
<comment type="miscellaneous">
    <text evidence="1">IL1B production occurs in 2 steps, each being controlled by different stimuli. First, inflammatory signals, such as LPS, stimulate the synthesis and promote the accumulation of cytosolic stores of pro-IL1B (priming). Then additional signals are required for inflammasome assembly, leading to CASP1 activation, pro-IL1B processing and eventually secretion of the active cytokine. IL1B processing and secretion are temporarily associated.</text>
</comment>
<comment type="similarity">
    <text evidence="4">Belongs to the IL-1 family.</text>
</comment>
<gene>
    <name type="primary">IL1B</name>
</gene>
<accession>P48090</accession>
<keyword id="KW-0202">Cytokine</keyword>
<keyword id="KW-0963">Cytoplasm</keyword>
<keyword id="KW-0395">Inflammatory response</keyword>
<keyword id="KW-0458">Lysosome</keyword>
<keyword id="KW-0497">Mitogen</keyword>
<keyword id="KW-0666">Pyrogen</keyword>
<keyword id="KW-1185">Reference proteome</keyword>
<keyword id="KW-0964">Secreted</keyword>
<evidence type="ECO:0000250" key="1"/>
<evidence type="ECO:0000250" key="2">
    <source>
        <dbReference type="UniProtKB" id="P01584"/>
    </source>
</evidence>
<evidence type="ECO:0000250" key="3">
    <source>
        <dbReference type="UniProtKB" id="P10749"/>
    </source>
</evidence>
<evidence type="ECO:0000305" key="4"/>
<feature type="propeptide" id="PRO_0000015307" evidence="1">
    <location>
        <begin position="1"/>
        <end position="116"/>
    </location>
</feature>
<feature type="chain" id="PRO_0000015308" description="Interleukin-1 beta">
    <location>
        <begin position="117"/>
        <end position="269"/>
    </location>
</feature>
<feature type="site" description="Important for interaction with integrin" evidence="2">
    <location>
        <position position="171"/>
    </location>
</feature>
<feature type="site" description="Important for interaction with integrin" evidence="2">
    <location>
        <position position="179"/>
    </location>
</feature>
<feature type="site" description="Important for interaction with integrin" evidence="2">
    <location>
        <position position="181"/>
    </location>
</feature>
<feature type="site" description="Important for interaction with integrin" evidence="2">
    <location>
        <position position="190"/>
    </location>
</feature>
<feature type="site" description="Important for interaction with integrin" evidence="2">
    <location>
        <position position="204"/>
    </location>
</feature>
<organism>
    <name type="scientific">Macaca mulatta</name>
    <name type="common">Rhesus macaque</name>
    <dbReference type="NCBI Taxonomy" id="9544"/>
    <lineage>
        <taxon>Eukaryota</taxon>
        <taxon>Metazoa</taxon>
        <taxon>Chordata</taxon>
        <taxon>Craniata</taxon>
        <taxon>Vertebrata</taxon>
        <taxon>Euteleostomi</taxon>
        <taxon>Mammalia</taxon>
        <taxon>Eutheria</taxon>
        <taxon>Euarchontoglires</taxon>
        <taxon>Primates</taxon>
        <taxon>Haplorrhini</taxon>
        <taxon>Catarrhini</taxon>
        <taxon>Cercopithecidae</taxon>
        <taxon>Cercopithecinae</taxon>
        <taxon>Macaca</taxon>
    </lineage>
</organism>
<proteinExistence type="evidence at transcript level"/>